<organism>
    <name type="scientific">Locusta migratoria</name>
    <name type="common">Migratory locust</name>
    <dbReference type="NCBI Taxonomy" id="7004"/>
    <lineage>
        <taxon>Eukaryota</taxon>
        <taxon>Metazoa</taxon>
        <taxon>Ecdysozoa</taxon>
        <taxon>Arthropoda</taxon>
        <taxon>Hexapoda</taxon>
        <taxon>Insecta</taxon>
        <taxon>Pterygota</taxon>
        <taxon>Neoptera</taxon>
        <taxon>Polyneoptera</taxon>
        <taxon>Orthoptera</taxon>
        <taxon>Caelifera</taxon>
        <taxon>Acrididea</taxon>
        <taxon>Acridomorpha</taxon>
        <taxon>Acridoidea</taxon>
        <taxon>Acrididae</taxon>
        <taxon>Oedipodinae</taxon>
        <taxon>Locusta</taxon>
    </lineage>
</organism>
<feature type="signal peptide" evidence="2">
    <location>
        <begin position="1"/>
        <end position="21"/>
    </location>
</feature>
<feature type="chain" id="PRO_5000143299" description="Putative defense protein">
    <location>
        <begin position="22"/>
        <end position="172"/>
    </location>
</feature>
<feature type="domain" description="Reelin" evidence="3">
    <location>
        <begin position="22"/>
        <end position="172"/>
    </location>
</feature>
<dbReference type="EMBL" id="M36206">
    <property type="protein sequence ID" value="AAA29283.1"/>
    <property type="molecule type" value="mRNA"/>
</dbReference>
<dbReference type="SMR" id="Q25313"/>
<dbReference type="GO" id="GO:0005576">
    <property type="term" value="C:extracellular region"/>
    <property type="evidence" value="ECO:0000250"/>
    <property type="project" value="UniProtKB"/>
</dbReference>
<dbReference type="GO" id="GO:0016020">
    <property type="term" value="C:membrane"/>
    <property type="evidence" value="ECO:0007669"/>
    <property type="project" value="TreeGrafter"/>
</dbReference>
<dbReference type="GO" id="GO:0042742">
    <property type="term" value="P:defense response to bacterium"/>
    <property type="evidence" value="ECO:0007669"/>
    <property type="project" value="UniProtKB-KW"/>
</dbReference>
<dbReference type="GO" id="GO:0042832">
    <property type="term" value="P:defense response to protozoan"/>
    <property type="evidence" value="ECO:0000250"/>
    <property type="project" value="UniProtKB"/>
</dbReference>
<dbReference type="GO" id="GO:0045087">
    <property type="term" value="P:innate immune response"/>
    <property type="evidence" value="ECO:0007669"/>
    <property type="project" value="UniProtKB-KW"/>
</dbReference>
<dbReference type="CDD" id="cd08544">
    <property type="entry name" value="Reeler"/>
    <property type="match status" value="1"/>
</dbReference>
<dbReference type="FunFam" id="2.60.40.4060:FF:000003">
    <property type="entry name" value="Ferric chelate reductase 1"/>
    <property type="match status" value="1"/>
</dbReference>
<dbReference type="Gene3D" id="2.60.40.4060">
    <property type="entry name" value="Reeler domain"/>
    <property type="match status" value="1"/>
</dbReference>
<dbReference type="InterPro" id="IPR051237">
    <property type="entry name" value="Ferric-chelate_Red/DefProt"/>
</dbReference>
<dbReference type="InterPro" id="IPR002861">
    <property type="entry name" value="Reeler_dom"/>
</dbReference>
<dbReference type="InterPro" id="IPR042307">
    <property type="entry name" value="Reeler_sf"/>
</dbReference>
<dbReference type="PANTHER" id="PTHR45828:SF9">
    <property type="entry name" value="CELL WALL INTEGRITY AND STRESS RESPONSE COMPONENT 4-LIKE-RELATED"/>
    <property type="match status" value="1"/>
</dbReference>
<dbReference type="PANTHER" id="PTHR45828">
    <property type="entry name" value="CYTOCHROME B561/FERRIC REDUCTASE TRANSMEMBRANE"/>
    <property type="match status" value="1"/>
</dbReference>
<dbReference type="Pfam" id="PF02014">
    <property type="entry name" value="Reeler"/>
    <property type="match status" value="1"/>
</dbReference>
<dbReference type="PROSITE" id="PS51019">
    <property type="entry name" value="REELIN"/>
    <property type="match status" value="1"/>
</dbReference>
<proteinExistence type="evidence at transcript level"/>
<evidence type="ECO:0000250" key="1"/>
<evidence type="ECO:0000255" key="2"/>
<evidence type="ECO:0000255" key="3">
    <source>
        <dbReference type="PROSITE-ProRule" id="PRU00363"/>
    </source>
</evidence>
<evidence type="ECO:0000305" key="4"/>
<sequence>MKLVVAAVLAMAASRWRRLSAHGQVPSSTCADMLPVHGNAMPSTALPYTITVSPTSVNGGDTVRVHISGTEEFRGVYLQRGGAKSSRRVPAARRREQQDRPVRLPAGHNNAFSYISRTPLDTLDIDWKAPYTSDEIVFRATFVKSFSEFWVGVESPKITLGPLRQLDNAVAA</sequence>
<reference key="1">
    <citation type="journal article" date="1988" name="Arch. Insect Biochem. Physiol.">
        <title>Gene structure, cDNA sequence, and developmental regulation of a low molecular weight hemolymph protein from Locusta migratoria.</title>
        <authorList>
            <person name="Kanost M.R."/>
            <person name="Bradfield J.Y."/>
            <person name="Cook K.E."/>
            <person name="Locke J."/>
            <person name="Wells M.A."/>
            <person name="Wyatt G.R."/>
        </authorList>
    </citation>
    <scope>NUCLEOTIDE SEQUENCE [MRNA]</scope>
</reference>
<comment type="function">
    <text evidence="1">May have antimicrobial activity.</text>
</comment>
<comment type="subcellular location">
    <subcellularLocation>
        <location evidence="1">Secreted</location>
    </subcellularLocation>
</comment>
<comment type="tissue specificity">
    <text>In adults, in hemolymph.</text>
</comment>
<comment type="induction">
    <text>Its synthesis is positively regulated by juvenile hormone.</text>
</comment>
<comment type="similarity">
    <text evidence="4">Belongs to the insect defense protein family.</text>
</comment>
<keyword id="KW-0044">Antibiotic</keyword>
<keyword id="KW-0929">Antimicrobial</keyword>
<keyword id="KW-0391">Immunity</keyword>
<keyword id="KW-0399">Innate immunity</keyword>
<keyword id="KW-0964">Secreted</keyword>
<keyword id="KW-0732">Signal</keyword>
<name>DFP_LOCMI</name>
<accession>Q25313</accession>
<protein>
    <recommendedName>
        <fullName>Putative defense protein</fullName>
    </recommendedName>
    <alternativeName>
        <fullName>Basic 19 kDa hemolymph protein</fullName>
    </alternativeName>
</protein>